<accession>B1LFR7</accession>
<feature type="chain" id="PRO_1000143115" description="Small ribosomal subunit protein uS15">
    <location>
        <begin position="1"/>
        <end position="89"/>
    </location>
</feature>
<gene>
    <name evidence="1" type="primary">rpsO</name>
    <name type="ordered locus">EcSMS35_3461</name>
</gene>
<proteinExistence type="inferred from homology"/>
<comment type="function">
    <text evidence="1">One of the primary rRNA binding proteins, it binds directly to 16S rRNA where it helps nucleate assembly of the platform of the 30S subunit by binding and bridging several RNA helices of the 16S rRNA.</text>
</comment>
<comment type="function">
    <text evidence="1">Forms an intersubunit bridge (bridge B4) with the 23S rRNA of the 50S subunit in the ribosome.</text>
</comment>
<comment type="subunit">
    <text evidence="1">Part of the 30S ribosomal subunit. Forms a bridge to the 50S subunit in the 70S ribosome, contacting the 23S rRNA.</text>
</comment>
<comment type="similarity">
    <text evidence="1">Belongs to the universal ribosomal protein uS15 family.</text>
</comment>
<protein>
    <recommendedName>
        <fullName evidence="1">Small ribosomal subunit protein uS15</fullName>
    </recommendedName>
    <alternativeName>
        <fullName evidence="2">30S ribosomal protein S15</fullName>
    </alternativeName>
</protein>
<reference key="1">
    <citation type="journal article" date="2008" name="J. Bacteriol.">
        <title>Insights into the environmental resistance gene pool from the genome sequence of the multidrug-resistant environmental isolate Escherichia coli SMS-3-5.</title>
        <authorList>
            <person name="Fricke W.F."/>
            <person name="Wright M.S."/>
            <person name="Lindell A.H."/>
            <person name="Harkins D.M."/>
            <person name="Baker-Austin C."/>
            <person name="Ravel J."/>
            <person name="Stepanauskas R."/>
        </authorList>
    </citation>
    <scope>NUCLEOTIDE SEQUENCE [LARGE SCALE GENOMIC DNA]</scope>
    <source>
        <strain>SMS-3-5 / SECEC</strain>
    </source>
</reference>
<evidence type="ECO:0000255" key="1">
    <source>
        <dbReference type="HAMAP-Rule" id="MF_01343"/>
    </source>
</evidence>
<evidence type="ECO:0000305" key="2"/>
<dbReference type="EMBL" id="CP000970">
    <property type="protein sequence ID" value="ACB17746.1"/>
    <property type="molecule type" value="Genomic_DNA"/>
</dbReference>
<dbReference type="RefSeq" id="WP_000059466.1">
    <property type="nucleotide sequence ID" value="NC_010498.1"/>
</dbReference>
<dbReference type="SMR" id="B1LFR7"/>
<dbReference type="GeneID" id="93778818"/>
<dbReference type="KEGG" id="ecm:EcSMS35_3461"/>
<dbReference type="HOGENOM" id="CLU_148518_0_0_6"/>
<dbReference type="Proteomes" id="UP000007011">
    <property type="component" value="Chromosome"/>
</dbReference>
<dbReference type="GO" id="GO:0022627">
    <property type="term" value="C:cytosolic small ribosomal subunit"/>
    <property type="evidence" value="ECO:0007669"/>
    <property type="project" value="TreeGrafter"/>
</dbReference>
<dbReference type="GO" id="GO:0019843">
    <property type="term" value="F:rRNA binding"/>
    <property type="evidence" value="ECO:0007669"/>
    <property type="project" value="UniProtKB-UniRule"/>
</dbReference>
<dbReference type="GO" id="GO:0003735">
    <property type="term" value="F:structural constituent of ribosome"/>
    <property type="evidence" value="ECO:0007669"/>
    <property type="project" value="InterPro"/>
</dbReference>
<dbReference type="GO" id="GO:0006412">
    <property type="term" value="P:translation"/>
    <property type="evidence" value="ECO:0007669"/>
    <property type="project" value="UniProtKB-UniRule"/>
</dbReference>
<dbReference type="CDD" id="cd00353">
    <property type="entry name" value="Ribosomal_S15p_S13e"/>
    <property type="match status" value="1"/>
</dbReference>
<dbReference type="FunFam" id="1.10.287.10:FF:000002">
    <property type="entry name" value="30S ribosomal protein S15"/>
    <property type="match status" value="1"/>
</dbReference>
<dbReference type="Gene3D" id="6.10.250.3130">
    <property type="match status" value="1"/>
</dbReference>
<dbReference type="Gene3D" id="1.10.287.10">
    <property type="entry name" value="S15/NS1, RNA-binding"/>
    <property type="match status" value="1"/>
</dbReference>
<dbReference type="HAMAP" id="MF_01343_B">
    <property type="entry name" value="Ribosomal_uS15_B"/>
    <property type="match status" value="1"/>
</dbReference>
<dbReference type="InterPro" id="IPR000589">
    <property type="entry name" value="Ribosomal_uS15"/>
</dbReference>
<dbReference type="InterPro" id="IPR005290">
    <property type="entry name" value="Ribosomal_uS15_bac-type"/>
</dbReference>
<dbReference type="InterPro" id="IPR009068">
    <property type="entry name" value="uS15_NS1_RNA-bd_sf"/>
</dbReference>
<dbReference type="NCBIfam" id="TIGR00952">
    <property type="entry name" value="S15_bact"/>
    <property type="match status" value="1"/>
</dbReference>
<dbReference type="PANTHER" id="PTHR23321">
    <property type="entry name" value="RIBOSOMAL PROTEIN S15, BACTERIAL AND ORGANELLAR"/>
    <property type="match status" value="1"/>
</dbReference>
<dbReference type="PANTHER" id="PTHR23321:SF26">
    <property type="entry name" value="SMALL RIBOSOMAL SUBUNIT PROTEIN US15M"/>
    <property type="match status" value="1"/>
</dbReference>
<dbReference type="Pfam" id="PF00312">
    <property type="entry name" value="Ribosomal_S15"/>
    <property type="match status" value="1"/>
</dbReference>
<dbReference type="SMART" id="SM01387">
    <property type="entry name" value="Ribosomal_S15"/>
    <property type="match status" value="1"/>
</dbReference>
<dbReference type="SUPFAM" id="SSF47060">
    <property type="entry name" value="S15/NS1 RNA-binding domain"/>
    <property type="match status" value="1"/>
</dbReference>
<dbReference type="PROSITE" id="PS00362">
    <property type="entry name" value="RIBOSOMAL_S15"/>
    <property type="match status" value="1"/>
</dbReference>
<name>RS15_ECOSM</name>
<organism>
    <name type="scientific">Escherichia coli (strain SMS-3-5 / SECEC)</name>
    <dbReference type="NCBI Taxonomy" id="439855"/>
    <lineage>
        <taxon>Bacteria</taxon>
        <taxon>Pseudomonadati</taxon>
        <taxon>Pseudomonadota</taxon>
        <taxon>Gammaproteobacteria</taxon>
        <taxon>Enterobacterales</taxon>
        <taxon>Enterobacteriaceae</taxon>
        <taxon>Escherichia</taxon>
    </lineage>
</organism>
<keyword id="KW-0687">Ribonucleoprotein</keyword>
<keyword id="KW-0689">Ribosomal protein</keyword>
<keyword id="KW-0694">RNA-binding</keyword>
<keyword id="KW-0699">rRNA-binding</keyword>
<sequence>MSLSTEATAKIVSEFGRDANDTGSTEVQVALLTAQINHLQGHFAEHKKDHHSRRGLLRMVSQRRKLLDYLKRKDVARYTQLIERLGLRR</sequence>